<evidence type="ECO:0000255" key="1">
    <source>
        <dbReference type="HAMAP-Rule" id="MF_00181"/>
    </source>
</evidence>
<comment type="function">
    <text evidence="1">Presumably involved in the processing and regular turnover of intracellular proteins. Catalyzes the removal of unsubstituted N-terminal amino acids from various peptides.</text>
</comment>
<comment type="catalytic activity">
    <reaction evidence="1">
        <text>Release of an N-terminal amino acid, Xaa-|-Yaa-, in which Xaa is preferably Leu, but may be other amino acids including Pro although not Arg or Lys, and Yaa may be Pro. Amino acid amides and methyl esters are also readily hydrolyzed, but rates on arylamides are exceedingly low.</text>
        <dbReference type="EC" id="3.4.11.1"/>
    </reaction>
</comment>
<comment type="catalytic activity">
    <reaction evidence="1">
        <text>Release of an N-terminal amino acid, preferentially leucine, but not glutamic or aspartic acids.</text>
        <dbReference type="EC" id="3.4.11.10"/>
    </reaction>
</comment>
<comment type="cofactor">
    <cofactor evidence="1">
        <name>Mn(2+)</name>
        <dbReference type="ChEBI" id="CHEBI:29035"/>
    </cofactor>
    <text evidence="1">Binds 2 manganese ions per subunit.</text>
</comment>
<comment type="subcellular location">
    <subcellularLocation>
        <location evidence="1">Cytoplasm</location>
    </subcellularLocation>
</comment>
<comment type="similarity">
    <text evidence="1">Belongs to the peptidase M17 family.</text>
</comment>
<organism>
    <name type="scientific">Pectobacterium atrosepticum (strain SCRI 1043 / ATCC BAA-672)</name>
    <name type="common">Erwinia carotovora subsp. atroseptica</name>
    <dbReference type="NCBI Taxonomy" id="218491"/>
    <lineage>
        <taxon>Bacteria</taxon>
        <taxon>Pseudomonadati</taxon>
        <taxon>Pseudomonadota</taxon>
        <taxon>Gammaproteobacteria</taxon>
        <taxon>Enterobacterales</taxon>
        <taxon>Pectobacteriaceae</taxon>
        <taxon>Pectobacterium</taxon>
    </lineage>
</organism>
<sequence>MEFSVKSGSPEKQRSACIVVGVFEPRRLSPIAEQLDKISDGYISALLRRGELEGKVGQSLLLHHVPNILSERILLIGCGKERELDERQYKQVIQKTINALNETGSMEAVCFLTELHVKGRNTYWKVRQAVETAKETLYTFDQLKSNKVELRRPLRKMVFNVPTRRELTSGERAIQHGLAIAAGIKAAKDLGNMPPNICNAAYLASQARQLADTYSQNTITRVIGEEQMKELGMNAYLAVGQGSQNESLMSVIEYKGDPNPENRPIVLVGKGLTFDSGGISIKPADSMDEMKYDMCGAATVYGVMRMAAELALPLNIIGVLAGCENMVDGRAYRPGDVLTTMSGQTVEVLNTDAEGRLVLCDTLTYVERYEPDVVIDVATLTGACVIALGHHITGLMANHNPLAHELLSASEQSGDRAWRLPLTDEFQEQLESNFADMANIGGRPGGAITAGCFLSRFTRKYSWAHLDIAGTAWRSGKAKGATGRPVALLSQFLLNRAGQNDVE</sequence>
<reference key="1">
    <citation type="journal article" date="2004" name="Proc. Natl. Acad. Sci. U.S.A.">
        <title>Genome sequence of the enterobacterial phytopathogen Erwinia carotovora subsp. atroseptica and characterization of virulence factors.</title>
        <authorList>
            <person name="Bell K.S."/>
            <person name="Sebaihia M."/>
            <person name="Pritchard L."/>
            <person name="Holden M.T.G."/>
            <person name="Hyman L.J."/>
            <person name="Holeva M.C."/>
            <person name="Thomson N.R."/>
            <person name="Bentley S.D."/>
            <person name="Churcher L.J.C."/>
            <person name="Mungall K."/>
            <person name="Atkin R."/>
            <person name="Bason N."/>
            <person name="Brooks K."/>
            <person name="Chillingworth T."/>
            <person name="Clark K."/>
            <person name="Doggett J."/>
            <person name="Fraser A."/>
            <person name="Hance Z."/>
            <person name="Hauser H."/>
            <person name="Jagels K."/>
            <person name="Moule S."/>
            <person name="Norbertczak H."/>
            <person name="Ormond D."/>
            <person name="Price C."/>
            <person name="Quail M.A."/>
            <person name="Sanders M."/>
            <person name="Walker D."/>
            <person name="Whitehead S."/>
            <person name="Salmond G.P.C."/>
            <person name="Birch P.R.J."/>
            <person name="Parkhill J."/>
            <person name="Toth I.K."/>
        </authorList>
    </citation>
    <scope>NUCLEOTIDE SEQUENCE [LARGE SCALE GENOMIC DNA]</scope>
    <source>
        <strain>SCRI 1043 / ATCC BAA-672</strain>
    </source>
</reference>
<protein>
    <recommendedName>
        <fullName evidence="1">Probable cytosol aminopeptidase</fullName>
        <ecNumber evidence="1">3.4.11.1</ecNumber>
    </recommendedName>
    <alternativeName>
        <fullName evidence="1">Leucine aminopeptidase</fullName>
        <shortName evidence="1">LAP</shortName>
        <ecNumber evidence="1">3.4.11.10</ecNumber>
    </alternativeName>
    <alternativeName>
        <fullName evidence="1">Leucyl aminopeptidase</fullName>
    </alternativeName>
</protein>
<gene>
    <name evidence="1" type="primary">pepA</name>
    <name type="ordered locus">ECA0404</name>
</gene>
<name>AMPA_PECAS</name>
<proteinExistence type="inferred from homology"/>
<feature type="chain" id="PRO_0000165753" description="Probable cytosol aminopeptidase">
    <location>
        <begin position="1"/>
        <end position="503"/>
    </location>
</feature>
<feature type="active site" evidence="1">
    <location>
        <position position="282"/>
    </location>
</feature>
<feature type="active site" evidence="1">
    <location>
        <position position="356"/>
    </location>
</feature>
<feature type="binding site" evidence="1">
    <location>
        <position position="270"/>
    </location>
    <ligand>
        <name>Mn(2+)</name>
        <dbReference type="ChEBI" id="CHEBI:29035"/>
        <label>2</label>
    </ligand>
</feature>
<feature type="binding site" evidence="1">
    <location>
        <position position="275"/>
    </location>
    <ligand>
        <name>Mn(2+)</name>
        <dbReference type="ChEBI" id="CHEBI:29035"/>
        <label>1</label>
    </ligand>
</feature>
<feature type="binding site" evidence="1">
    <location>
        <position position="275"/>
    </location>
    <ligand>
        <name>Mn(2+)</name>
        <dbReference type="ChEBI" id="CHEBI:29035"/>
        <label>2</label>
    </ligand>
</feature>
<feature type="binding site" evidence="1">
    <location>
        <position position="293"/>
    </location>
    <ligand>
        <name>Mn(2+)</name>
        <dbReference type="ChEBI" id="CHEBI:29035"/>
        <label>2</label>
    </ligand>
</feature>
<feature type="binding site" evidence="1">
    <location>
        <position position="352"/>
    </location>
    <ligand>
        <name>Mn(2+)</name>
        <dbReference type="ChEBI" id="CHEBI:29035"/>
        <label>1</label>
    </ligand>
</feature>
<feature type="binding site" evidence="1">
    <location>
        <position position="354"/>
    </location>
    <ligand>
        <name>Mn(2+)</name>
        <dbReference type="ChEBI" id="CHEBI:29035"/>
        <label>1</label>
    </ligand>
</feature>
<feature type="binding site" evidence="1">
    <location>
        <position position="354"/>
    </location>
    <ligand>
        <name>Mn(2+)</name>
        <dbReference type="ChEBI" id="CHEBI:29035"/>
        <label>2</label>
    </ligand>
</feature>
<accession>Q6DA52</accession>
<keyword id="KW-0031">Aminopeptidase</keyword>
<keyword id="KW-0963">Cytoplasm</keyword>
<keyword id="KW-0378">Hydrolase</keyword>
<keyword id="KW-0464">Manganese</keyword>
<keyword id="KW-0479">Metal-binding</keyword>
<keyword id="KW-0645">Protease</keyword>
<keyword id="KW-1185">Reference proteome</keyword>
<dbReference type="EC" id="3.4.11.1" evidence="1"/>
<dbReference type="EC" id="3.4.11.10" evidence="1"/>
<dbReference type="EMBL" id="BX950851">
    <property type="protein sequence ID" value="CAG73323.1"/>
    <property type="molecule type" value="Genomic_DNA"/>
</dbReference>
<dbReference type="RefSeq" id="WP_011092033.1">
    <property type="nucleotide sequence ID" value="NC_004547.2"/>
</dbReference>
<dbReference type="SMR" id="Q6DA52"/>
<dbReference type="STRING" id="218491.ECA0404"/>
<dbReference type="MEROPS" id="M17.003"/>
<dbReference type="KEGG" id="eca:ECA0404"/>
<dbReference type="eggNOG" id="COG0260">
    <property type="taxonomic scope" value="Bacteria"/>
</dbReference>
<dbReference type="HOGENOM" id="CLU_013734_0_0_6"/>
<dbReference type="OrthoDB" id="9809354at2"/>
<dbReference type="Proteomes" id="UP000007966">
    <property type="component" value="Chromosome"/>
</dbReference>
<dbReference type="GO" id="GO:0005737">
    <property type="term" value="C:cytoplasm"/>
    <property type="evidence" value="ECO:0007669"/>
    <property type="project" value="UniProtKB-SubCell"/>
</dbReference>
<dbReference type="GO" id="GO:0030145">
    <property type="term" value="F:manganese ion binding"/>
    <property type="evidence" value="ECO:0007669"/>
    <property type="project" value="UniProtKB-UniRule"/>
</dbReference>
<dbReference type="GO" id="GO:0070006">
    <property type="term" value="F:metalloaminopeptidase activity"/>
    <property type="evidence" value="ECO:0007669"/>
    <property type="project" value="InterPro"/>
</dbReference>
<dbReference type="GO" id="GO:0006508">
    <property type="term" value="P:proteolysis"/>
    <property type="evidence" value="ECO:0007669"/>
    <property type="project" value="UniProtKB-KW"/>
</dbReference>
<dbReference type="CDD" id="cd00433">
    <property type="entry name" value="Peptidase_M17"/>
    <property type="match status" value="1"/>
</dbReference>
<dbReference type="FunFam" id="3.40.220.10:FF:000001">
    <property type="entry name" value="Probable cytosol aminopeptidase"/>
    <property type="match status" value="1"/>
</dbReference>
<dbReference type="FunFam" id="3.40.630.10:FF:000004">
    <property type="entry name" value="Probable cytosol aminopeptidase"/>
    <property type="match status" value="1"/>
</dbReference>
<dbReference type="Gene3D" id="3.40.220.10">
    <property type="entry name" value="Leucine Aminopeptidase, subunit E, domain 1"/>
    <property type="match status" value="1"/>
</dbReference>
<dbReference type="Gene3D" id="3.40.630.10">
    <property type="entry name" value="Zn peptidases"/>
    <property type="match status" value="1"/>
</dbReference>
<dbReference type="HAMAP" id="MF_00181">
    <property type="entry name" value="Cytosol_peptidase_M17"/>
    <property type="match status" value="1"/>
</dbReference>
<dbReference type="InterPro" id="IPR011356">
    <property type="entry name" value="Leucine_aapep/pepB"/>
</dbReference>
<dbReference type="InterPro" id="IPR043472">
    <property type="entry name" value="Macro_dom-like"/>
</dbReference>
<dbReference type="InterPro" id="IPR000819">
    <property type="entry name" value="Peptidase_M17_C"/>
</dbReference>
<dbReference type="InterPro" id="IPR023042">
    <property type="entry name" value="Peptidase_M17_leu_NH2_pept"/>
</dbReference>
<dbReference type="InterPro" id="IPR008283">
    <property type="entry name" value="Peptidase_M17_N"/>
</dbReference>
<dbReference type="NCBIfam" id="NF002072">
    <property type="entry name" value="PRK00913.1-1"/>
    <property type="match status" value="1"/>
</dbReference>
<dbReference type="NCBIfam" id="NF002074">
    <property type="entry name" value="PRK00913.1-4"/>
    <property type="match status" value="1"/>
</dbReference>
<dbReference type="PANTHER" id="PTHR11963:SF23">
    <property type="entry name" value="CYTOSOL AMINOPEPTIDASE"/>
    <property type="match status" value="1"/>
</dbReference>
<dbReference type="PANTHER" id="PTHR11963">
    <property type="entry name" value="LEUCINE AMINOPEPTIDASE-RELATED"/>
    <property type="match status" value="1"/>
</dbReference>
<dbReference type="Pfam" id="PF00883">
    <property type="entry name" value="Peptidase_M17"/>
    <property type="match status" value="1"/>
</dbReference>
<dbReference type="Pfam" id="PF02789">
    <property type="entry name" value="Peptidase_M17_N"/>
    <property type="match status" value="1"/>
</dbReference>
<dbReference type="PRINTS" id="PR00481">
    <property type="entry name" value="LAMNOPPTDASE"/>
</dbReference>
<dbReference type="SUPFAM" id="SSF52949">
    <property type="entry name" value="Macro domain-like"/>
    <property type="match status" value="1"/>
</dbReference>
<dbReference type="SUPFAM" id="SSF53187">
    <property type="entry name" value="Zn-dependent exopeptidases"/>
    <property type="match status" value="1"/>
</dbReference>
<dbReference type="PROSITE" id="PS00631">
    <property type="entry name" value="CYTOSOL_AP"/>
    <property type="match status" value="1"/>
</dbReference>